<gene>
    <name evidence="1" type="primary">glgB</name>
    <name type="ordered locus">Mfla_1367</name>
</gene>
<accession>Q1H1K2</accession>
<organism>
    <name type="scientific">Methylobacillus flagellatus (strain ATCC 51484 / DSM 6875 / VKM B-1610 / KT)</name>
    <dbReference type="NCBI Taxonomy" id="265072"/>
    <lineage>
        <taxon>Bacteria</taxon>
        <taxon>Pseudomonadati</taxon>
        <taxon>Pseudomonadota</taxon>
        <taxon>Betaproteobacteria</taxon>
        <taxon>Nitrosomonadales</taxon>
        <taxon>Methylophilaceae</taxon>
        <taxon>Methylobacillus</taxon>
    </lineage>
</organism>
<sequence>MLTKSKQDPHLNHILNARHHDPFSYLGLHQDGTQYILRLFQPFAARAWLQTASGWVPLQRSHEAGLFEWKGNTPPPVPCRIRLEENGHSWETYDAYTFWTTLSPEELYLFGEGRLKQAYRTFGAHLCEQQGVAGVRFVVWAPNAERVSVIGNFNHWDGRMHQMRVHGSSGVWEIFIPGLTSSDLYKFEIRNRQTGQILVKTDPYGFSFEQRPGTAARVTAHGHYAWQDAEWLEDRARADWLHAPFNCYEVHLGSWRRDAHGEFLGYRELAHQLVPYMQEMGYTHIELLPVSEHPLNESWGYQTTGYFAPTNRFGSPDDLRYFVDQCHQAGIGVILDWVPGHFPKDDWALARFDGSALFEHEDPRLGEHQDWGTYIFNYGRNEVRNFLLASAHYWLEEFHMDGLRVDAVASMLYLDYSRKEGEWLPNRHGGRENLEAIDFLKQLNVMVHEDFPGALTIAEESTSWPMVSRPVYLGGLGFSMKWNMGWMNDTLSYMQHDPIHRRFHHDKLTFGQIYAYSENFVLPFSHDEVVHGKRSLLDKMPGDTWQKFANLRLLATYQMTASGKKLNFMGNELAQGREWNVNSSLDWHLLDLHWHQGIQRLHRDLSHLYRQVPALHELDFDAHGFEWIDCSDSDQSIINYLRRARDGSFVLVLLNFTPVLRSGYRVGTPLAGHYREIFNSDAGYYGGSNQGNGNGLQTEAYPWMGHSHSLVVTIPPLGGVIIQPG</sequence>
<feature type="chain" id="PRO_0000260666" description="1,4-alpha-glucan branching enzyme GlgB">
    <location>
        <begin position="1"/>
        <end position="725"/>
    </location>
</feature>
<feature type="active site" description="Nucleophile" evidence="1">
    <location>
        <position position="406"/>
    </location>
</feature>
<feature type="active site" description="Proton donor" evidence="1">
    <location>
        <position position="459"/>
    </location>
</feature>
<dbReference type="EC" id="2.4.1.18" evidence="1"/>
<dbReference type="EMBL" id="CP000284">
    <property type="protein sequence ID" value="ABE49635.1"/>
    <property type="molecule type" value="Genomic_DNA"/>
</dbReference>
<dbReference type="RefSeq" id="WP_011479589.1">
    <property type="nucleotide sequence ID" value="NC_007947.1"/>
</dbReference>
<dbReference type="SMR" id="Q1H1K2"/>
<dbReference type="STRING" id="265072.Mfla_1367"/>
<dbReference type="CAZy" id="CBM48">
    <property type="family name" value="Carbohydrate-Binding Module Family 48"/>
</dbReference>
<dbReference type="CAZy" id="GH13">
    <property type="family name" value="Glycoside Hydrolase Family 13"/>
</dbReference>
<dbReference type="KEGG" id="mfa:Mfla_1367"/>
<dbReference type="eggNOG" id="COG0296">
    <property type="taxonomic scope" value="Bacteria"/>
</dbReference>
<dbReference type="HOGENOM" id="CLU_004245_3_2_4"/>
<dbReference type="OrthoDB" id="9800174at2"/>
<dbReference type="UniPathway" id="UPA00164"/>
<dbReference type="Proteomes" id="UP000002440">
    <property type="component" value="Chromosome"/>
</dbReference>
<dbReference type="GO" id="GO:0005829">
    <property type="term" value="C:cytosol"/>
    <property type="evidence" value="ECO:0007669"/>
    <property type="project" value="TreeGrafter"/>
</dbReference>
<dbReference type="GO" id="GO:0003844">
    <property type="term" value="F:1,4-alpha-glucan branching enzyme activity"/>
    <property type="evidence" value="ECO:0007669"/>
    <property type="project" value="UniProtKB-UniRule"/>
</dbReference>
<dbReference type="GO" id="GO:0043169">
    <property type="term" value="F:cation binding"/>
    <property type="evidence" value="ECO:0007669"/>
    <property type="project" value="InterPro"/>
</dbReference>
<dbReference type="GO" id="GO:0004553">
    <property type="term" value="F:hydrolase activity, hydrolyzing O-glycosyl compounds"/>
    <property type="evidence" value="ECO:0007669"/>
    <property type="project" value="InterPro"/>
</dbReference>
<dbReference type="GO" id="GO:0005978">
    <property type="term" value="P:glycogen biosynthetic process"/>
    <property type="evidence" value="ECO:0007669"/>
    <property type="project" value="UniProtKB-UniRule"/>
</dbReference>
<dbReference type="CDD" id="cd11322">
    <property type="entry name" value="AmyAc_Glg_BE"/>
    <property type="match status" value="1"/>
</dbReference>
<dbReference type="CDD" id="cd02855">
    <property type="entry name" value="E_set_GBE_prok_N"/>
    <property type="match status" value="1"/>
</dbReference>
<dbReference type="FunFam" id="2.60.40.10:FF:000169">
    <property type="entry name" value="1,4-alpha-glucan branching enzyme GlgB"/>
    <property type="match status" value="1"/>
</dbReference>
<dbReference type="FunFam" id="2.60.40.1180:FF:000002">
    <property type="entry name" value="1,4-alpha-glucan branching enzyme GlgB"/>
    <property type="match status" value="1"/>
</dbReference>
<dbReference type="FunFam" id="3.20.20.80:FF:000003">
    <property type="entry name" value="1,4-alpha-glucan branching enzyme GlgB"/>
    <property type="match status" value="1"/>
</dbReference>
<dbReference type="Gene3D" id="3.20.20.80">
    <property type="entry name" value="Glycosidases"/>
    <property type="match status" value="1"/>
</dbReference>
<dbReference type="Gene3D" id="2.60.40.1180">
    <property type="entry name" value="Golgi alpha-mannosidase II"/>
    <property type="match status" value="1"/>
</dbReference>
<dbReference type="Gene3D" id="2.60.40.10">
    <property type="entry name" value="Immunoglobulins"/>
    <property type="match status" value="1"/>
</dbReference>
<dbReference type="HAMAP" id="MF_00685">
    <property type="entry name" value="GlgB"/>
    <property type="match status" value="1"/>
</dbReference>
<dbReference type="InterPro" id="IPR006048">
    <property type="entry name" value="A-amylase/branching_C"/>
</dbReference>
<dbReference type="InterPro" id="IPR037439">
    <property type="entry name" value="Branching_enzy"/>
</dbReference>
<dbReference type="InterPro" id="IPR006407">
    <property type="entry name" value="GlgB"/>
</dbReference>
<dbReference type="InterPro" id="IPR054169">
    <property type="entry name" value="GlgB_N"/>
</dbReference>
<dbReference type="InterPro" id="IPR044143">
    <property type="entry name" value="GlgB_N_E_set_prok"/>
</dbReference>
<dbReference type="InterPro" id="IPR006047">
    <property type="entry name" value="Glyco_hydro_13_cat_dom"/>
</dbReference>
<dbReference type="InterPro" id="IPR004193">
    <property type="entry name" value="Glyco_hydro_13_N"/>
</dbReference>
<dbReference type="InterPro" id="IPR013780">
    <property type="entry name" value="Glyco_hydro_b"/>
</dbReference>
<dbReference type="InterPro" id="IPR017853">
    <property type="entry name" value="Glycoside_hydrolase_SF"/>
</dbReference>
<dbReference type="InterPro" id="IPR013783">
    <property type="entry name" value="Ig-like_fold"/>
</dbReference>
<dbReference type="InterPro" id="IPR014756">
    <property type="entry name" value="Ig_E-set"/>
</dbReference>
<dbReference type="NCBIfam" id="TIGR01515">
    <property type="entry name" value="branching_enzym"/>
    <property type="match status" value="1"/>
</dbReference>
<dbReference type="NCBIfam" id="NF003811">
    <property type="entry name" value="PRK05402.1"/>
    <property type="match status" value="1"/>
</dbReference>
<dbReference type="NCBIfam" id="NF008967">
    <property type="entry name" value="PRK12313.1"/>
    <property type="match status" value="1"/>
</dbReference>
<dbReference type="PANTHER" id="PTHR43651">
    <property type="entry name" value="1,4-ALPHA-GLUCAN-BRANCHING ENZYME"/>
    <property type="match status" value="1"/>
</dbReference>
<dbReference type="PANTHER" id="PTHR43651:SF3">
    <property type="entry name" value="1,4-ALPHA-GLUCAN-BRANCHING ENZYME"/>
    <property type="match status" value="1"/>
</dbReference>
<dbReference type="Pfam" id="PF00128">
    <property type="entry name" value="Alpha-amylase"/>
    <property type="match status" value="2"/>
</dbReference>
<dbReference type="Pfam" id="PF02806">
    <property type="entry name" value="Alpha-amylase_C"/>
    <property type="match status" value="1"/>
</dbReference>
<dbReference type="Pfam" id="PF02922">
    <property type="entry name" value="CBM_48"/>
    <property type="match status" value="1"/>
</dbReference>
<dbReference type="Pfam" id="PF22019">
    <property type="entry name" value="GlgB_N"/>
    <property type="match status" value="1"/>
</dbReference>
<dbReference type="PIRSF" id="PIRSF000463">
    <property type="entry name" value="GlgB"/>
    <property type="match status" value="1"/>
</dbReference>
<dbReference type="SMART" id="SM00642">
    <property type="entry name" value="Aamy"/>
    <property type="match status" value="1"/>
</dbReference>
<dbReference type="SUPFAM" id="SSF51445">
    <property type="entry name" value="(Trans)glycosidases"/>
    <property type="match status" value="1"/>
</dbReference>
<dbReference type="SUPFAM" id="SSF81296">
    <property type="entry name" value="E set domains"/>
    <property type="match status" value="2"/>
</dbReference>
<dbReference type="SUPFAM" id="SSF51011">
    <property type="entry name" value="Glycosyl hydrolase domain"/>
    <property type="match status" value="1"/>
</dbReference>
<protein>
    <recommendedName>
        <fullName evidence="1">1,4-alpha-glucan branching enzyme GlgB</fullName>
        <ecNumber evidence="1">2.4.1.18</ecNumber>
    </recommendedName>
    <alternativeName>
        <fullName evidence="1">1,4-alpha-D-glucan:1,4-alpha-D-glucan 6-glucosyl-transferase</fullName>
    </alternativeName>
    <alternativeName>
        <fullName evidence="1">Alpha-(1-&gt;4)-glucan branching enzyme</fullName>
    </alternativeName>
    <alternativeName>
        <fullName evidence="1">Glycogen branching enzyme</fullName>
        <shortName evidence="1">BE</shortName>
    </alternativeName>
</protein>
<proteinExistence type="inferred from homology"/>
<name>GLGB_METFK</name>
<comment type="function">
    <text evidence="1">Catalyzes the formation of the alpha-1,6-glucosidic linkages in glycogen by scission of a 1,4-alpha-linked oligosaccharide from growing alpha-1,4-glucan chains and the subsequent attachment of the oligosaccharide to the alpha-1,6 position.</text>
</comment>
<comment type="catalytic activity">
    <reaction evidence="1">
        <text>Transfers a segment of a (1-&gt;4)-alpha-D-glucan chain to a primary hydroxy group in a similar glucan chain.</text>
        <dbReference type="EC" id="2.4.1.18"/>
    </reaction>
</comment>
<comment type="pathway">
    <text evidence="1">Glycan biosynthesis; glycogen biosynthesis.</text>
</comment>
<comment type="subunit">
    <text evidence="1">Monomer.</text>
</comment>
<comment type="similarity">
    <text evidence="1">Belongs to the glycosyl hydrolase 13 family. GlgB subfamily.</text>
</comment>
<evidence type="ECO:0000255" key="1">
    <source>
        <dbReference type="HAMAP-Rule" id="MF_00685"/>
    </source>
</evidence>
<keyword id="KW-0119">Carbohydrate metabolism</keyword>
<keyword id="KW-0320">Glycogen biosynthesis</keyword>
<keyword id="KW-0321">Glycogen metabolism</keyword>
<keyword id="KW-0328">Glycosyltransferase</keyword>
<keyword id="KW-1185">Reference proteome</keyword>
<keyword id="KW-0808">Transferase</keyword>
<reference key="1">
    <citation type="submission" date="2006-03" db="EMBL/GenBank/DDBJ databases">
        <title>Complete sequence of Methylobacillus flagellatus KT.</title>
        <authorList>
            <consortium name="US DOE Joint Genome Institute"/>
            <person name="Copeland A."/>
            <person name="Lucas S."/>
            <person name="Lapidus A."/>
            <person name="Barry K."/>
            <person name="Detter J.C."/>
            <person name="Glavina del Rio T."/>
            <person name="Hammon N."/>
            <person name="Israni S."/>
            <person name="Dalin E."/>
            <person name="Tice H."/>
            <person name="Pitluck S."/>
            <person name="Brettin T."/>
            <person name="Bruce D."/>
            <person name="Han C."/>
            <person name="Tapia R."/>
            <person name="Saunders E."/>
            <person name="Gilna P."/>
            <person name="Schmutz J."/>
            <person name="Larimer F."/>
            <person name="Land M."/>
            <person name="Kyrpides N."/>
            <person name="Anderson I."/>
            <person name="Richardson P."/>
        </authorList>
    </citation>
    <scope>NUCLEOTIDE SEQUENCE [LARGE SCALE GENOMIC DNA]</scope>
    <source>
        <strain>ATCC 51484 / DSM 6875 / VKM B-1610 / KT</strain>
    </source>
</reference>